<feature type="signal peptide" evidence="2">
    <location>
        <begin position="1"/>
        <end position="20"/>
    </location>
</feature>
<feature type="chain" id="PRO_5015097581" description="Beta-lactamase CMY-2" evidence="2">
    <location>
        <begin position="21"/>
        <end position="381"/>
    </location>
</feature>
<feature type="active site" description="Acyl-ester intermediate" evidence="1 3">
    <location>
        <position position="84"/>
    </location>
</feature>
<feature type="binding site" evidence="1">
    <location>
        <position position="84"/>
    </location>
    <ligand>
        <name>a beta-lactam</name>
        <dbReference type="ChEBI" id="CHEBI:35627"/>
    </ligand>
</feature>
<feature type="binding site" evidence="1">
    <location>
        <position position="140"/>
    </location>
    <ligand>
        <name>a beta-lactam</name>
        <dbReference type="ChEBI" id="CHEBI:35627"/>
    </ligand>
</feature>
<feature type="binding site" evidence="1">
    <location>
        <position position="170"/>
    </location>
    <ligand>
        <name>a beta-lactam</name>
        <dbReference type="ChEBI" id="CHEBI:35627"/>
    </ligand>
</feature>
<feature type="binding site" evidence="1">
    <location>
        <position position="172"/>
    </location>
    <ligand>
        <name>a beta-lactam</name>
        <dbReference type="ChEBI" id="CHEBI:35627"/>
    </ligand>
</feature>
<feature type="mutagenesis site" description="Decreases catalytic efficiency about 5-fold, with respect to nitrocefin or cefalotin; when associated with Y-366. Decreases catalytic efficiency about 20-fold, with respect to nitrocefin or cefalotin; when associated with K-140, S-231 and Y-366. Reduces inhibition by avibactam about 20,000-fold; when associated with K-140, S-231, and Y-366." evidence="10">
    <original>A</original>
    <variation>E</variation>
    <location>
        <position position="134"/>
    </location>
</feature>
<feature type="mutagenesis site" description="Decreases catalytic efficiency about 5-fold, with respect to nitrocefin or cefalotin; when associated with Y-366. Decreases catalytic efficiency about 20-fold, with respect to nitrocefin or cefalotin; when associated with E-134, S-231 and Y-366. Confers weak hydrolytic capacity, with respect to ceftazidime; when associated with Y-366. Reduces inhibition by avibactam about 10,000-fold; when associated with Y-366. Reduces inhibition by avibactam about 20,000-fold; when associated with E-134, S-231, and Y-366." evidence="10">
    <original>Q</original>
    <variation>K</variation>
    <location>
        <position position="140"/>
    </location>
</feature>
<feature type="mutagenesis site" description="Abolishes resistance to penicillins and cephalosporins in DH5alpha strain E.coli." evidence="8">
    <original>N</original>
    <variation>A</variation>
    <variation>C</variation>
    <variation>D</variation>
    <variation>E</variation>
    <variation>F</variation>
    <variation>H</variation>
    <variation>I</variation>
    <variation>K</variation>
    <variation>L</variation>
    <variation>M</variation>
    <variation>P</variation>
    <variation>Q</variation>
    <variation>R</variation>
    <variation>V</variation>
    <variation>W</variation>
    <variation>Y</variation>
    <location>
        <position position="172"/>
    </location>
</feature>
<feature type="mutagenesis site" description="Moderately increases catalytic activity against cefoxitin. No effect on resistance to penicillins and cephalosporins in DH5alpha strain E.coli. Increases susceptibility to inhibition by tazobactam." evidence="8">
    <original>N</original>
    <variation>G</variation>
    <variation>S</variation>
    <variation>T</variation>
    <location>
        <position position="172"/>
    </location>
</feature>
<feature type="mutagenesis site" description="Confers weak hydrolytic capacity, with respect to ceftazidime or cefiderocol. Decreases catalytic efficiency about 20-fold, with respect to nitrocefin or cefalotin; when associated with E-134, K-140, and Y-366. Decreases catalytic efficiency about 5-fold, with respect to nitrocefin or cefalotin; when associated with Y-366. Reduces inhibition by avibactam about 20,000-fold; when associated with E-134, K-140, and Y-366." evidence="10">
    <original>V</original>
    <variation>S</variation>
    <location>
        <position position="231"/>
    </location>
</feature>
<feature type="mutagenesis site" description="Decreases catalytic efficiency about 5-fold, with respect to nitrocefin. Similar change in catalytic efficiency, with respect to nitrocefin; when associated with E-134, or with K-140 or with S-231. Decreases catalytic efficiency about 20-fold, with respect to nitrocefin or cefalotin; when associated with E-134, K-140 and S-231. Decreases catalytic efficiency about 3-fold, with respect to cefalotin. Confers weak hydrolytic capacity, with respect to ceftazidime; when associated with K-140. Reduces inhibition by avibactam about 1000-fold. Reduces inhibition by avibactam about 10,000-fold; when associated with K-140. Reduces inhibition by avibactam about 20,000-fold; when associated with E-134, K-140, and S-231." evidence="10">
    <original>N</original>
    <variation>Y</variation>
    <location>
        <position position="366"/>
    </location>
</feature>
<feature type="helix" evidence="24">
    <location>
        <begin position="25"/>
        <end position="43"/>
    </location>
</feature>
<feature type="strand" evidence="24">
    <location>
        <begin position="46"/>
        <end position="54"/>
    </location>
</feature>
<feature type="strand" evidence="24">
    <location>
        <begin position="57"/>
        <end position="67"/>
    </location>
</feature>
<feature type="turn" evidence="24">
    <location>
        <begin position="68"/>
        <end position="71"/>
    </location>
</feature>
<feature type="strand" evidence="24">
    <location>
        <begin position="79"/>
        <end position="81"/>
    </location>
</feature>
<feature type="helix" evidence="24">
    <location>
        <begin position="83"/>
        <end position="85"/>
    </location>
</feature>
<feature type="helix" evidence="24">
    <location>
        <begin position="86"/>
        <end position="100"/>
    </location>
</feature>
<feature type="strand" evidence="24">
    <location>
        <begin position="107"/>
        <end position="109"/>
    </location>
</feature>
<feature type="turn" evidence="24">
    <location>
        <begin position="110"/>
        <end position="112"/>
    </location>
</feature>
<feature type="helix" evidence="24">
    <location>
        <begin position="119"/>
        <end position="121"/>
    </location>
</feature>
<feature type="helix" evidence="24">
    <location>
        <begin position="126"/>
        <end position="130"/>
    </location>
</feature>
<feature type="helix" evidence="24">
    <location>
        <begin position="148"/>
        <end position="157"/>
    </location>
</feature>
<feature type="turn" evidence="24">
    <location>
        <begin position="164"/>
        <end position="166"/>
    </location>
</feature>
<feature type="helix" evidence="24">
    <location>
        <begin position="172"/>
        <end position="182"/>
    </location>
</feature>
<feature type="helix" evidence="24">
    <location>
        <begin position="184"/>
        <end position="186"/>
    </location>
</feature>
<feature type="helix" evidence="24">
    <location>
        <begin position="190"/>
        <end position="197"/>
    </location>
</feature>
<feature type="turn" evidence="24">
    <location>
        <begin position="198"/>
        <end position="203"/>
    </location>
</feature>
<feature type="strand" evidence="24">
    <location>
        <begin position="207"/>
        <end position="210"/>
    </location>
</feature>
<feature type="helix" evidence="24">
    <location>
        <begin position="213"/>
        <end position="218"/>
    </location>
</feature>
<feature type="strand" evidence="24">
    <location>
        <begin position="222"/>
        <end position="224"/>
    </location>
</feature>
<feature type="strand" evidence="24">
    <location>
        <begin position="227"/>
        <end position="229"/>
    </location>
</feature>
<feature type="helix" evidence="24">
    <location>
        <begin position="237"/>
        <end position="240"/>
    </location>
</feature>
<feature type="helix" evidence="24">
    <location>
        <begin position="247"/>
        <end position="258"/>
    </location>
</feature>
<feature type="helix" evidence="24">
    <location>
        <begin position="266"/>
        <end position="275"/>
    </location>
</feature>
<feature type="strand" evidence="24">
    <location>
        <begin position="277"/>
        <end position="282"/>
    </location>
</feature>
<feature type="strand" evidence="24">
    <location>
        <begin position="285"/>
        <end position="287"/>
    </location>
</feature>
<feature type="strand" evidence="24">
    <location>
        <begin position="292"/>
        <end position="297"/>
    </location>
</feature>
<feature type="helix" evidence="24">
    <location>
        <begin position="300"/>
        <end position="306"/>
    </location>
</feature>
<feature type="helix" evidence="24">
    <location>
        <begin position="309"/>
        <end position="312"/>
    </location>
</feature>
<feature type="strand" evidence="24">
    <location>
        <begin position="319"/>
        <end position="325"/>
    </location>
</feature>
<feature type="strand" evidence="24">
    <location>
        <begin position="329"/>
        <end position="338"/>
    </location>
</feature>
<feature type="strand" evidence="24">
    <location>
        <begin position="343"/>
        <end position="348"/>
    </location>
</feature>
<feature type="helix" evidence="24">
    <location>
        <begin position="350"/>
        <end position="352"/>
    </location>
</feature>
<feature type="strand" evidence="24">
    <location>
        <begin position="355"/>
        <end position="362"/>
    </location>
</feature>
<feature type="helix" evidence="24">
    <location>
        <begin position="366"/>
        <end position="378"/>
    </location>
</feature>
<name>BLCY2_KLEPN</name>
<comment type="function">
    <text evidence="5 6 7 8 9 10 11">Class C beta-lactamase which confers resistance to penicillins and cephalosporins (PubMed:12407124, PubMed:16189104, PubMed:17204406, PubMed:28665771, PubMed:8787910). Has nitrocefin-, cefoxitin- and cefoperazone-hydrolyzing activities (PubMed:16189104, PubMed:23318801, PubMed:28665771).</text>
</comment>
<comment type="catalytic activity">
    <reaction evidence="4 6 8 9">
        <text>a beta-lactam + H2O = a substituted beta-amino acid</text>
        <dbReference type="Rhea" id="RHEA:20401"/>
        <dbReference type="ChEBI" id="CHEBI:15377"/>
        <dbReference type="ChEBI" id="CHEBI:35627"/>
        <dbReference type="ChEBI" id="CHEBI:140347"/>
        <dbReference type="EC" id="3.5.2.6"/>
    </reaction>
</comment>
<comment type="activity regulation">
    <text evidence="7 8 9 10">Inhibited by the beta-lactamase-blocking agents sulbactam, tazobactam, avibactam and 3-aminophenylboronic acid (APB).</text>
</comment>
<comment type="biophysicochemical properties">
    <kinetics>
        <KM evidence="6">0.4 uM for benzylpenicillin (at pH 7.0 and 30 degrees Celsius)</KM>
        <KM evidence="6">0.16 uM for ampicillin (at pH 7.0 and 30 degrees Celsius)</KM>
        <KM evidence="6">6.0E-4 uM for oxacillin (at pH 7.0 and 30 degrees Celsius)</KM>
        <KM evidence="9">17 uM for nitrocefin (at 25 degrees Celsius)</KM>
        <KM evidence="8">32 uM for nitrocefin (at pH 7.4 and 23-26 degrees Celsius)</KM>
        <KM evidence="6">8 uM for nitrocefin (at pH 7.0 and 30 degrees Celsius)</KM>
        <KM evidence="10">17 uM for nitrocefin (at pH 7.2 and 25 degrees Celsius)</KM>
        <KM evidence="6">93 uM for cephaloridine (at pH 7.0 and 30 degrees Celsius)</KM>
        <KM evidence="9">5.18 uM for cefalotin (at 25 degrees Celsius)</KM>
        <KM evidence="6">2.1 uM for cefalotin (at pH 7.0 and 30 degrees Celsius)</KM>
        <KM evidence="10">4.1 uM for cefalotin (at pH 7.2 and 25 degrees Celsius)</KM>
        <KM evidence="9">0.23 uM for cefoxitin (at 25 degrees Celsius)</KM>
        <KM evidence="8">14 uM for cefoxitin (at pH 7.4 and 23-26 degrees Celsius)</KM>
        <KM evidence="6">0.07 uM for cefoxitin (at pH 7.0 and 30 degrees Celsius)</KM>
        <KM evidence="6">16 uM for cephalexin (at pH 7.0 and 30 degrees Celsius)</KM>
        <KM evidence="9">28.5 uM for ceftazidime (at 25 degrees Celsius)</KM>
        <KM evidence="9">2.23 uM for cefotaxime (at 25 degrees Celsius)</KM>
        <KM evidence="6">0.0012 uM for cefotaxime (at pH 7.0 and 30 degrees Celsius)</KM>
        <KM evidence="8">10 uM for cefoperazone (at pH 7.4 and 23-26 degrees Celsius)</KM>
        <KM evidence="6">0.001 uM for cefuroxime (at pH 7.0 and 30 degrees Celsius)</KM>
        <text evidence="6 8 9">kcat is 14 sec(-1) with benzylpenicillin as substrate (at pH 7.0 and 30 degrees Celsius) (PubMed:16189104). kcat is 0.55 sec(-1) with ampicillin as substrate (at pH 7.0 and 30 degrees Celsius) (PubMed:16189104). kcat is 0.015 sec(-1) with oxacillin as substrate (at pH 7.0 and 30 degrees Celsius) (PubMed:16189104). kcat is 609 sec(-1) with nitrocefin as substrate (at 25 degrees Celsius) (PubMed:28665771). kcat is 400 sec(-1) with nitrocefin as substrate (at pH 7.4 and 23-26 degrees Celsius) (PubMed:23318801). kcat is 765 sec(-1) with nitrocefin as substrate (at pH 7.0 and 30 degrees Celsius) (PubMed:16189104). kcat is 215 sec(-1) with cephaloridine as substrate (at pH 7.0 and 30 degrees Celsius) (PubMed:16189104). kcat is 591 sec(-1) with cefalotin as substrate (at 25 degrees Celsius) (PubMed:28665771). kcat is 0.40 sec(-1) with cefoxitin as substrate (at 25 degrees Celsius) (PubMed:28665771). kcat is 35 sec(-1) with cefoxitin as substrate (at pH 7.4 and 23-26 degrees Celsius) (PubMed:23318801). kcat is 0.23 sec(-1) with cefoxitin as substrate (at pH 7.0 and 30 degrees Celsius) (PubMed:16189104). kcat is 0.009 sec(-1) with ceftazidime as substrate (at 25 degrees Celsius) (PubMed:28665771). kcat is 1.99 sec(-1) with cefotaxime as substrate (at 25 degrees Celsius) (PubMed:28665771). kcat is 0.004 sec(-1) with cefotaxime as substrate (at pH 7.0 and 30 degrees Celsius) (PubMed:16189104). kcat is 40 sec(-1) with cefoperazone as substrate (at 23-26 degrees Celsius) (PubMed:23318801). kcat is 0.017 sec(-1) with cefuroxime as substrate (at pH 7.0 and 30 degrees Celsius) (PubMed:16189104).</text>
    </kinetics>
</comment>
<comment type="induction">
    <text evidence="12">May confer resistance to poorer substrates by high level expression.</text>
</comment>
<comment type="miscellaneous">
    <text evidence="16">Described as a cephamycinase, but cephamycin substrates such as cefoxitin are chemically very similar to cephalosporins, and sometimes classified as a type of cephalosporin.</text>
</comment>
<comment type="miscellaneous">
    <text evidence="15">The class C beta-lactamase family has a specific amino-acid numbering system known as SANC, for structural alignment-based numbering of class C beta-lactamases, or else the simpler name structural position. A multiple sequence alignment was used to derive a consensus sequence and then the consensus was numbered taking into account insertions and deletions. This allows use of identical numbers, e.g. for active site residues, despite differences in protein length. UniProt always uses natural numbering of residues, hence there appear to be differences in numbering between this entry and some papers.</text>
</comment>
<comment type="similarity">
    <text evidence="4 14">Belongs to the class-C beta-lactamase family.</text>
</comment>
<reference evidence="21" key="1">
    <citation type="journal article" date="1996" name="Antimicrob. Agents Chemother.">
        <title>Characterization of the plasmidic beta-lactamase CMY-2, which is responsible for cephamycin resistance.</title>
        <authorList>
            <person name="Bauernfeind A."/>
            <person name="Stemplinger I."/>
            <person name="Jungwirth R."/>
            <person name="Giamarellou H."/>
        </authorList>
    </citation>
    <scope>NUCLEOTIDE SEQUENCE [GENOMIC DNA]</scope>
    <scope>FUNCTION</scope>
    <source>
        <strain evidence="21">HEL-1</strain>
        <plasmid evidence="21">pMVP-2</plasmid>
    </source>
</reference>
<reference evidence="22" key="2">
    <citation type="journal article" date="2002" name="J. Antimicrob. Chemother.">
        <title>Characterization of CMY-type beta-lactamases in clinical strains of Proteus mirabilis and Klebsiella pneumoniae isolated in four hospitals in the Paris area.</title>
        <authorList>
            <person name="Decre D."/>
            <person name="Verdet C."/>
            <person name="Raskine L."/>
            <person name="Blanchard H."/>
            <person name="Burghoffer B."/>
            <person name="Philippon A."/>
            <person name="Sanson-Le-Pors M.J."/>
            <person name="Petit J.C."/>
            <person name="Arlet G."/>
        </authorList>
    </citation>
    <scope>NUCLEOTIDE SEQUENCE [GENOMIC DNA]</scope>
    <scope>FUNCTION</scope>
    <source>
        <strain evidence="22">169</strain>
    </source>
</reference>
<reference evidence="18" key="3">
    <citation type="submission" date="2014-05" db="EMBL/GenBank/DDBJ databases">
        <title>Molecular epidemiology of plasmid-mediated AmpC beta-lactamase producing Klebsiella pneumoniae.</title>
        <authorList>
            <person name="Matsumura Y."/>
        </authorList>
    </citation>
    <scope>NUCLEOTIDE SEQUENCE [GENOMIC DNA]</scope>
    <source>
        <strain evidence="19">KUN-2012-0129</strain>
        <strain evidence="20">KUN-6476</strain>
        <strain evidence="18">KUN-7746</strain>
    </source>
</reference>
<reference evidence="17" key="4">
    <citation type="journal article" date="2015" name="J. Antimicrob. Chemother.">
        <title>Experimental evidence for IS1294b-mediated transposition of the blaCMY-2 cephalosporinase gene in Enterobacteriaceae.</title>
        <authorList>
            <person name="Yassine H."/>
            <person name="Bientz L."/>
            <person name="Cros J."/>
            <person name="Goret J."/>
            <person name="Bebear C."/>
            <person name="Quentin C."/>
            <person name="Arpin C."/>
        </authorList>
    </citation>
    <scope>NUCLEOTIDE SEQUENCE [GENOMIC DNA]</scope>
    <source>
        <strain evidence="17">Kp2735</strain>
        <plasmid evidence="17">p2735</plasmid>
    </source>
</reference>
<reference evidence="14" key="5">
    <citation type="journal article" date="2005" name="Antimicrob. Agents Chemother.">
        <title>Kinetic properties of four plasmid-mediated AmpC beta-lactamases.</title>
        <authorList>
            <person name="Bauvois C."/>
            <person name="Ibuka A.S."/>
            <person name="Celso A."/>
            <person name="Alba J."/>
            <person name="Ishii Y."/>
            <person name="Frere J.M."/>
            <person name="Galleni M."/>
        </authorList>
    </citation>
    <scope>FUNCTION</scope>
    <scope>CATALYTIC ACTIVITY</scope>
    <scope>BIOPHYSICOCHEMICAL PROPERTIES</scope>
    <scope>INDUCTION</scope>
</reference>
<reference evidence="14" key="6">
    <citation type="journal article" date="2007" name="Int. J. Antimicrob. Agents">
        <title>Reduced imipenem susceptibility in Klebsiella pneumoniae clinical isolates with plasmid-mediated CMY-2 and DHA-1 beta-lactamases co-mediated by porin loss.</title>
        <authorList>
            <person name="Lee K."/>
            <person name="Yong D."/>
            <person name="Choi Y.S."/>
            <person name="Yum J.H."/>
            <person name="Kim J.M."/>
            <person name="Woodford N."/>
            <person name="Livermore D.M."/>
            <person name="Chong Y."/>
        </authorList>
    </citation>
    <scope>FUNCTION</scope>
    <scope>ACTIVITY REGULATION</scope>
</reference>
<reference evidence="14" key="7">
    <citation type="journal article" date="2013" name="Antimicrob. Agents Chemother.">
        <title>N152G, -S, and -T substitutions in CMY-2 beta-lactamase increase catalytic efficiency for cefoxitin and inactivation rates for tazobactam.</title>
        <authorList>
            <person name="Skalweit M.J."/>
            <person name="Li M."/>
            <person name="Conklin B.C."/>
            <person name="Taracila M.A."/>
            <person name="Hutton R.A."/>
        </authorList>
    </citation>
    <scope>FUNCTION</scope>
    <scope>CATALYTIC ACTIVITY</scope>
    <scope>ACTIVITY REGULATION</scope>
    <scope>BIOPHYSICOCHEMICAL PROPERTIES</scope>
    <scope>MUTAGENESIS OF ASN-172</scope>
</reference>
<reference evidence="14" key="8">
    <citation type="journal article" date="2018" name="Microb. Drug Resist.">
        <title>Increased Antimicrobial Resistance in a Novel CMY-54 AmpC-Type Enzyme with a GluLeu217-218 Insertion in the Omega-Loop.</title>
        <authorList>
            <person name="Perez-Llarena F.J."/>
            <person name="Vazquez-Ucha J.C."/>
            <person name="Kerff F."/>
            <person name="Zamorano L."/>
            <person name="Miro E."/>
            <person name="Cabral M.P."/>
            <person name="Fleites A."/>
            <person name="Lantero M."/>
            <person name="Martinez-Martinez L."/>
            <person name="Oliver A."/>
            <person name="Galleni M."/>
            <person name="Navarro F."/>
            <person name="Beceiro A."/>
            <person name="Bou G."/>
        </authorList>
    </citation>
    <scope>FUNCTION</scope>
    <scope>CATALYTIC ACTIVITY</scope>
    <scope>ACTIVITY REGULATION</scope>
    <scope>BIOPHYSICOCHEMICAL PROPERTIES</scope>
</reference>
<reference key="9">
    <citation type="journal article" date="2020" name="Antimicrob. Agents Chemother.">
        <title>A Standard Numbering Scheme for Class C beta-Lactamases.</title>
        <authorList>
            <person name="Mack A.R."/>
            <person name="Barnes M.D."/>
            <person name="Taracila M.A."/>
            <person name="Hujer A.M."/>
            <person name="Hujer K.M."/>
            <person name="Cabot G."/>
            <person name="Feldgarden M."/>
            <person name="Haft D.H."/>
            <person name="Klimke W."/>
            <person name="van den Akker F."/>
            <person name="Vila A.J."/>
            <person name="Smania A."/>
            <person name="Haider S."/>
            <person name="Papp-Wallace K.M."/>
            <person name="Bradford P.A."/>
            <person name="Rossolini G.M."/>
            <person name="Docquier J.D."/>
            <person name="Frere J.M."/>
            <person name="Galleni M."/>
            <person name="Hanson N.D."/>
            <person name="Oliver A."/>
            <person name="Plesiat P."/>
            <person name="Poirel L."/>
            <person name="Nordmann P."/>
            <person name="Palzkill T.G."/>
            <person name="Jacoby G.A."/>
            <person name="Bush K."/>
            <person name="Bonomo R.A."/>
        </authorList>
    </citation>
    <scope>AMINO ACID NUMBERING SCHEME</scope>
</reference>
<reference key="10">
    <citation type="journal article" date="2024" name="MBio">
        <title>Structural insights into the molecular mechanism of high-level ceftazidime-avibactam resistance conferred by CMY-185.</title>
        <authorList>
            <person name="Kawai A."/>
            <person name="Shropshire W.C."/>
            <person name="Suzuki M."/>
            <person name="Borjan J."/>
            <person name="Aitken S.L."/>
            <person name="Bachman W.C."/>
            <person name="McElheny C.L."/>
            <person name="Bhatti M.M."/>
            <person name="Shields R.K."/>
            <person name="Shelburne S.A."/>
            <person name="Doi Y."/>
        </authorList>
    </citation>
    <scope>FUNCTION</scope>
    <scope>BIOPHYSICOCHEMICAL PROPERTIES</scope>
    <scope>ACTIVITY REGULATION</scope>
    <scope>MUTAGENESIS OF ALA-134; GLN-140; VAL-231 AND ASN-366</scope>
</reference>
<reference evidence="23" key="11">
    <citation type="submission" date="2005-04" db="PDB data bank">
        <title>Crystallographic structure of plasmid-encoded CMY-2 beta-lactamase revealed citrate molecule in the active site.</title>
        <authorList>
            <person name="Bauvois C."/>
            <person name="Jacquamet L."/>
            <person name="Fieulaine S."/>
            <person name="Frere J.-M."/>
            <person name="Galleni M."/>
            <person name="Ferrer J.-L."/>
        </authorList>
    </citation>
    <scope>X-RAY CRYSTALLOGRAPHY (2.09 ANGSTROMS) OF 21-381</scope>
</reference>
<gene>
    <name evidence="17" type="primary">blaCMY-2</name>
    <name evidence="13" type="synonym">CMY-2</name>
</gene>
<sequence>MMKKSLCCALLLTASFSTFAAAKTEQQIADIVNRTITPLMQEQAIPGMAVAVIYQGKPYYFTWGKADIANNHPVTQQTLFELGSVSKTFNGVLGGDAIARGEIKLSDPVTKYWPELTGKQWQGIRLLHLATYTAGGLPLQIPDDVRDKAALLHFYQNWQPQWTPGAKRLYANSSIGLFGALAVKPSGMSYEEAMTRRVLQPLKLAHTWITVPQNEQKDYAWGYREGKPVHVSPGQLDAEAYGVKSSVIDMARWVQANMDASHVQEKTLQQGIALAQSRYWRIGDMYQGLGWEMLNWPLKADSIINGSDSKVALAALPAVEVNPPAPAVKASWVHKTGSTGGFGSYVAFVPEKNLGIVMLANKSYPNPVRVEAAWRILEKLQ</sequence>
<geneLocation type="plasmid" evidence="17">
    <name>p2735</name>
</geneLocation>
<geneLocation type="plasmid" evidence="21">
    <name>pMVP-2</name>
</geneLocation>
<keyword id="KW-0002">3D-structure</keyword>
<keyword id="KW-0046">Antibiotic resistance</keyword>
<keyword id="KW-0378">Hydrolase</keyword>
<keyword id="KW-0614">Plasmid</keyword>
<keyword id="KW-0732">Signal</keyword>
<evidence type="ECO:0000250" key="1">
    <source>
        <dbReference type="UniProtKB" id="P00811"/>
    </source>
</evidence>
<evidence type="ECO:0000255" key="2"/>
<evidence type="ECO:0000255" key="3">
    <source>
        <dbReference type="PROSITE-ProRule" id="PRU10102"/>
    </source>
</evidence>
<evidence type="ECO:0000255" key="4">
    <source>
        <dbReference type="RuleBase" id="RU361140"/>
    </source>
</evidence>
<evidence type="ECO:0000269" key="5">
    <source>
    </source>
</evidence>
<evidence type="ECO:0000269" key="6">
    <source>
    </source>
</evidence>
<evidence type="ECO:0000269" key="7">
    <source>
    </source>
</evidence>
<evidence type="ECO:0000269" key="8">
    <source>
    </source>
</evidence>
<evidence type="ECO:0000269" key="9">
    <source>
    </source>
</evidence>
<evidence type="ECO:0000269" key="10">
    <source>
    </source>
</evidence>
<evidence type="ECO:0000269" key="11">
    <source>
    </source>
</evidence>
<evidence type="ECO:0000303" key="12">
    <source>
    </source>
</evidence>
<evidence type="ECO:0000303" key="13">
    <source>
    </source>
</evidence>
<evidence type="ECO:0000305" key="14"/>
<evidence type="ECO:0000305" key="15">
    <source>
    </source>
</evidence>
<evidence type="ECO:0000305" key="16">
    <source>
    </source>
</evidence>
<evidence type="ECO:0000312" key="17">
    <source>
        <dbReference type="EMBL" id="AIY68272.1"/>
    </source>
</evidence>
<evidence type="ECO:0000312" key="18">
    <source>
        <dbReference type="EMBL" id="BAO79721.1"/>
    </source>
</evidence>
<evidence type="ECO:0000312" key="19">
    <source>
        <dbReference type="EMBL" id="BAO79723.1"/>
    </source>
</evidence>
<evidence type="ECO:0000312" key="20">
    <source>
        <dbReference type="EMBL" id="BAO79728.1"/>
    </source>
</evidence>
<evidence type="ECO:0000312" key="21">
    <source>
        <dbReference type="EMBL" id="CAA62957.1"/>
    </source>
</evidence>
<evidence type="ECO:0000312" key="22">
    <source>
        <dbReference type="EMBL" id="CAA76381.1"/>
    </source>
</evidence>
<evidence type="ECO:0007744" key="23">
    <source>
        <dbReference type="PDB" id="1ZC2"/>
    </source>
</evidence>
<evidence type="ECO:0007829" key="24">
    <source>
        <dbReference type="PDB" id="1ZC2"/>
    </source>
</evidence>
<proteinExistence type="evidence at protein level"/>
<protein>
    <recommendedName>
        <fullName evidence="4 14">Beta-lactamase CMY-2</fullName>
        <ecNumber evidence="4 6 8 9">3.5.2.6</ecNumber>
    </recommendedName>
</protein>
<organism evidence="21">
    <name type="scientific">Klebsiella pneumoniae</name>
    <dbReference type="NCBI Taxonomy" id="573"/>
    <lineage>
        <taxon>Bacteria</taxon>
        <taxon>Pseudomonadati</taxon>
        <taxon>Pseudomonadota</taxon>
        <taxon>Gammaproteobacteria</taxon>
        <taxon>Enterobacterales</taxon>
        <taxon>Enterobacteriaceae</taxon>
        <taxon>Klebsiella/Raoultella group</taxon>
        <taxon>Klebsiella</taxon>
        <taxon>Klebsiella pneumoniae complex</taxon>
    </lineage>
</organism>
<accession>Q48434</accession>
<dbReference type="EC" id="3.5.2.6" evidence="4 6 8 9"/>
<dbReference type="EMBL" id="X91840">
    <property type="protein sequence ID" value="CAA62957.1"/>
    <property type="molecule type" value="Genomic_DNA"/>
</dbReference>
<dbReference type="EMBL" id="Y16784">
    <property type="protein sequence ID" value="CAA76381.1"/>
    <property type="molecule type" value="Genomic_DNA"/>
</dbReference>
<dbReference type="EMBL" id="AB933350">
    <property type="protein sequence ID" value="BAO79721.1"/>
    <property type="molecule type" value="Genomic_DNA"/>
</dbReference>
<dbReference type="EMBL" id="AB933351">
    <property type="protein sequence ID" value="BAO79723.1"/>
    <property type="molecule type" value="Genomic_DNA"/>
</dbReference>
<dbReference type="EMBL" id="AB933352">
    <property type="protein sequence ID" value="BAO79728.1"/>
    <property type="molecule type" value="Genomic_DNA"/>
</dbReference>
<dbReference type="EMBL" id="KP017243">
    <property type="protein sequence ID" value="AIY68272.1"/>
    <property type="molecule type" value="Genomic_DNA"/>
</dbReference>
<dbReference type="EMBL" id="QIWC01000040">
    <property type="protein sequence ID" value="PXJ16544.1"/>
    <property type="molecule type" value="Genomic_DNA"/>
</dbReference>
<dbReference type="PDB" id="1ZC2">
    <property type="method" value="X-ray"/>
    <property type="resolution" value="2.09 A"/>
    <property type="chains" value="A/B=21-381"/>
</dbReference>
<dbReference type="PDBsum" id="1ZC2"/>
<dbReference type="SMR" id="Q48434"/>
<dbReference type="CARD" id="ARO:3002013">
    <property type="molecule name" value="CMY-2"/>
    <property type="mechanism identifier" value="ARO:0001004"/>
    <property type="mechanism name" value="antibiotic inactivation"/>
</dbReference>
<dbReference type="MEROPS" id="S12.006"/>
<dbReference type="KEGG" id="ag:CAA62957"/>
<dbReference type="PATRIC" id="fig|573.1476.peg.45"/>
<dbReference type="BRENDA" id="3.5.2.6">
    <property type="organism ID" value="2814"/>
</dbReference>
<dbReference type="EvolutionaryTrace" id="Q48434"/>
<dbReference type="GO" id="GO:0030288">
    <property type="term" value="C:outer membrane-bounded periplasmic space"/>
    <property type="evidence" value="ECO:0007669"/>
    <property type="project" value="InterPro"/>
</dbReference>
<dbReference type="GO" id="GO:0008800">
    <property type="term" value="F:beta-lactamase activity"/>
    <property type="evidence" value="ECO:0007669"/>
    <property type="project" value="UniProtKB-EC"/>
</dbReference>
<dbReference type="GO" id="GO:0017001">
    <property type="term" value="P:antibiotic catabolic process"/>
    <property type="evidence" value="ECO:0007669"/>
    <property type="project" value="InterPro"/>
</dbReference>
<dbReference type="GO" id="GO:0046677">
    <property type="term" value="P:response to antibiotic"/>
    <property type="evidence" value="ECO:0007669"/>
    <property type="project" value="UniProtKB-KW"/>
</dbReference>
<dbReference type="FunFam" id="3.40.710.10:FF:000012">
    <property type="entry name" value="Beta-lactamase"/>
    <property type="match status" value="1"/>
</dbReference>
<dbReference type="Gene3D" id="3.40.710.10">
    <property type="entry name" value="DD-peptidase/beta-lactamase superfamily"/>
    <property type="match status" value="1"/>
</dbReference>
<dbReference type="InterPro" id="IPR050491">
    <property type="entry name" value="Bact_CellWall_Synth/Modif"/>
</dbReference>
<dbReference type="InterPro" id="IPR001466">
    <property type="entry name" value="Beta-lactam-related"/>
</dbReference>
<dbReference type="InterPro" id="IPR012338">
    <property type="entry name" value="Beta-lactam/transpept-like"/>
</dbReference>
<dbReference type="InterPro" id="IPR001586">
    <property type="entry name" value="Beta-lactam_class-C_AS"/>
</dbReference>
<dbReference type="NCBIfam" id="NF033085">
    <property type="entry name" value="bla_class_C"/>
    <property type="match status" value="1"/>
</dbReference>
<dbReference type="NCBIfam" id="NF000191">
    <property type="entry name" value="CMY2"/>
    <property type="match status" value="1"/>
</dbReference>
<dbReference type="NCBIfam" id="NF012173">
    <property type="entry name" value="CMY2-MIR-ACT-EC"/>
    <property type="match status" value="1"/>
</dbReference>
<dbReference type="PANTHER" id="PTHR46825:SF8">
    <property type="entry name" value="BETA-LACTAMASE-RELATED"/>
    <property type="match status" value="1"/>
</dbReference>
<dbReference type="PANTHER" id="PTHR46825">
    <property type="entry name" value="D-ALANYL-D-ALANINE-CARBOXYPEPTIDASE/ENDOPEPTIDASE AMPH"/>
    <property type="match status" value="1"/>
</dbReference>
<dbReference type="Pfam" id="PF00144">
    <property type="entry name" value="Beta-lactamase"/>
    <property type="match status" value="1"/>
</dbReference>
<dbReference type="SUPFAM" id="SSF56601">
    <property type="entry name" value="beta-lactamase/transpeptidase-like"/>
    <property type="match status" value="1"/>
</dbReference>
<dbReference type="PROSITE" id="PS00336">
    <property type="entry name" value="BETA_LACTAMASE_C"/>
    <property type="match status" value="1"/>
</dbReference>